<name>3MGH_MYCFO</name>
<comment type="similarity">
    <text evidence="1">Belongs to the DNA glycosylase MPG family.</text>
</comment>
<sequence length="194" mass="20023">PLLAARRLLGAELIGRGVTAAIVEVEAYGGPADGPWPDAASHSFRGAGGRNLVMFGPPGHLYTYRSHGIHVCANVVCGFDGVAGAVLLRAAVVRTGADVAGRRRGPAILPAALARGPGNLCSALGITMEDNGIDLFDADSPVRLTLGEPVPSVDGPRVGVSKAADRRWRLWLADSSEVSAYRRSPRAPAPGASD</sequence>
<organism>
    <name type="scientific">Mycolicibacterium fortuitum</name>
    <name type="common">Mycobacterium fortuitum</name>
    <dbReference type="NCBI Taxonomy" id="1766"/>
    <lineage>
        <taxon>Bacteria</taxon>
        <taxon>Bacillati</taxon>
        <taxon>Actinomycetota</taxon>
        <taxon>Actinomycetes</taxon>
        <taxon>Mycobacteriales</taxon>
        <taxon>Mycobacteriaceae</taxon>
        <taxon>Mycolicibacterium</taxon>
    </lineage>
</organism>
<evidence type="ECO:0000305" key="1"/>
<feature type="chain" id="PRO_0000100092" description="Putative 3-methyladenine DNA glycosylase">
    <location>
        <begin position="1" status="less than"/>
        <end position="194"/>
    </location>
</feature>
<feature type="non-terminal residue">
    <location>
        <position position="1"/>
    </location>
</feature>
<accession>Q9EUU9</accession>
<dbReference type="EC" id="3.2.2.-"/>
<dbReference type="EMBL" id="AJ296160">
    <property type="protein sequence ID" value="CAC18747.1"/>
    <property type="molecule type" value="Genomic_DNA"/>
</dbReference>
<dbReference type="SMR" id="Q9EUU9"/>
<dbReference type="STRING" id="1766.XA26_34940"/>
<dbReference type="GO" id="GO:0003905">
    <property type="term" value="F:alkylbase DNA N-glycosylase activity"/>
    <property type="evidence" value="ECO:0007669"/>
    <property type="project" value="InterPro"/>
</dbReference>
<dbReference type="GO" id="GO:0003677">
    <property type="term" value="F:DNA binding"/>
    <property type="evidence" value="ECO:0007669"/>
    <property type="project" value="InterPro"/>
</dbReference>
<dbReference type="GO" id="GO:0006284">
    <property type="term" value="P:base-excision repair"/>
    <property type="evidence" value="ECO:0007669"/>
    <property type="project" value="InterPro"/>
</dbReference>
<dbReference type="CDD" id="cd00540">
    <property type="entry name" value="AAG"/>
    <property type="match status" value="1"/>
</dbReference>
<dbReference type="Gene3D" id="3.10.300.10">
    <property type="entry name" value="Methylpurine-DNA glycosylase (MPG)"/>
    <property type="match status" value="1"/>
</dbReference>
<dbReference type="HAMAP" id="MF_00527">
    <property type="entry name" value="3MGH"/>
    <property type="match status" value="1"/>
</dbReference>
<dbReference type="InterPro" id="IPR011034">
    <property type="entry name" value="Formyl_transferase-like_C_sf"/>
</dbReference>
<dbReference type="InterPro" id="IPR003180">
    <property type="entry name" value="MPG"/>
</dbReference>
<dbReference type="InterPro" id="IPR036995">
    <property type="entry name" value="MPG_sf"/>
</dbReference>
<dbReference type="NCBIfam" id="TIGR00567">
    <property type="entry name" value="3mg"/>
    <property type="match status" value="1"/>
</dbReference>
<dbReference type="NCBIfam" id="NF002003">
    <property type="entry name" value="PRK00802.1-3"/>
    <property type="match status" value="1"/>
</dbReference>
<dbReference type="PANTHER" id="PTHR10429">
    <property type="entry name" value="DNA-3-METHYLADENINE GLYCOSYLASE"/>
    <property type="match status" value="1"/>
</dbReference>
<dbReference type="PANTHER" id="PTHR10429:SF0">
    <property type="entry name" value="DNA-3-METHYLADENINE GLYCOSYLASE"/>
    <property type="match status" value="1"/>
</dbReference>
<dbReference type="Pfam" id="PF02245">
    <property type="entry name" value="Pur_DNA_glyco"/>
    <property type="match status" value="1"/>
</dbReference>
<dbReference type="SUPFAM" id="SSF50486">
    <property type="entry name" value="FMT C-terminal domain-like"/>
    <property type="match status" value="1"/>
</dbReference>
<reference key="1">
    <citation type="journal article" date="2002" name="J. Bacteriol.">
        <title>Characterization of an rRNA operon (rrnB) of Mycobacterium fortuitum and other mycobacterial species: implications for the classification of mycobacteria.</title>
        <authorList>
            <person name="Menendez M.C."/>
            <person name="Garcia M.J."/>
            <person name="Navarro M.C."/>
            <person name="Gonzalez-y-Merchand J.A."/>
            <person name="Rivera-Gutierrez S."/>
            <person name="Garcia-Sanchez L."/>
            <person name="Cox R.A."/>
        </authorList>
    </citation>
    <scope>NUCLEOTIDE SEQUENCE [GENOMIC DNA]</scope>
    <source>
        <strain>ATCC 6841 / DSM 46621 / CIP 104534 / JCM 6387 / KCTC 9510 / NBRC 13159 / NCTC 10394</strain>
    </source>
</reference>
<proteinExistence type="inferred from homology"/>
<protein>
    <recommendedName>
        <fullName>Putative 3-methyladenine DNA glycosylase</fullName>
        <shortName>3-mag</shortName>
        <ecNumber>3.2.2.-</ecNumber>
    </recommendedName>
</protein>
<keyword id="KW-0227">DNA damage</keyword>
<keyword id="KW-0234">DNA repair</keyword>
<keyword id="KW-0378">Hydrolase</keyword>